<accession>C5BD71</accession>
<proteinExistence type="inferred from homology"/>
<reference key="1">
    <citation type="submission" date="2009-03" db="EMBL/GenBank/DDBJ databases">
        <title>Complete genome sequence of Edwardsiella ictaluri 93-146.</title>
        <authorList>
            <person name="Williams M.L."/>
            <person name="Gillaspy A.F."/>
            <person name="Dyer D.W."/>
            <person name="Thune R.L."/>
            <person name="Waldbieser G.C."/>
            <person name="Schuster S.C."/>
            <person name="Gipson J."/>
            <person name="Zaitshik J."/>
            <person name="Landry C."/>
            <person name="Lawrence M.L."/>
        </authorList>
    </citation>
    <scope>NUCLEOTIDE SEQUENCE [LARGE SCALE GENOMIC DNA]</scope>
    <source>
        <strain>93-146</strain>
    </source>
</reference>
<keyword id="KW-1003">Cell membrane</keyword>
<keyword id="KW-0285">Flavoprotein</keyword>
<keyword id="KW-0288">FMN</keyword>
<keyword id="KW-0472">Membrane</keyword>
<keyword id="KW-0560">Oxidoreductase</keyword>
<keyword id="KW-0665">Pyrimidine biosynthesis</keyword>
<organism>
    <name type="scientific">Edwardsiella ictaluri (strain 93-146)</name>
    <dbReference type="NCBI Taxonomy" id="634503"/>
    <lineage>
        <taxon>Bacteria</taxon>
        <taxon>Pseudomonadati</taxon>
        <taxon>Pseudomonadota</taxon>
        <taxon>Gammaproteobacteria</taxon>
        <taxon>Enterobacterales</taxon>
        <taxon>Hafniaceae</taxon>
        <taxon>Edwardsiella</taxon>
    </lineage>
</organism>
<evidence type="ECO:0000255" key="1">
    <source>
        <dbReference type="HAMAP-Rule" id="MF_00225"/>
    </source>
</evidence>
<protein>
    <recommendedName>
        <fullName evidence="1">Dihydroorotate dehydrogenase (quinone)</fullName>
        <ecNumber evidence="1">1.3.5.2</ecNumber>
    </recommendedName>
    <alternativeName>
        <fullName evidence="1">DHOdehase</fullName>
        <shortName evidence="1">DHOD</shortName>
        <shortName evidence="1">DHODase</shortName>
    </alternativeName>
    <alternativeName>
        <fullName evidence="1">Dihydroorotate oxidase</fullName>
    </alternativeName>
</protein>
<dbReference type="EC" id="1.3.5.2" evidence="1"/>
<dbReference type="EMBL" id="CP001600">
    <property type="protein sequence ID" value="ACR68566.1"/>
    <property type="molecule type" value="Genomic_DNA"/>
</dbReference>
<dbReference type="RefSeq" id="WP_015870731.1">
    <property type="nucleotide sequence ID" value="NZ_CP169062.1"/>
</dbReference>
<dbReference type="SMR" id="C5BD71"/>
<dbReference type="STRING" id="67780.B6E78_00230"/>
<dbReference type="GeneID" id="69538387"/>
<dbReference type="KEGG" id="eic:NT01EI_1376"/>
<dbReference type="PATRIC" id="fig|634503.3.peg.1237"/>
<dbReference type="HOGENOM" id="CLU_013640_2_0_6"/>
<dbReference type="OrthoDB" id="9802377at2"/>
<dbReference type="UniPathway" id="UPA00070">
    <property type="reaction ID" value="UER00946"/>
</dbReference>
<dbReference type="Proteomes" id="UP000001485">
    <property type="component" value="Chromosome"/>
</dbReference>
<dbReference type="GO" id="GO:0005737">
    <property type="term" value="C:cytoplasm"/>
    <property type="evidence" value="ECO:0007669"/>
    <property type="project" value="InterPro"/>
</dbReference>
<dbReference type="GO" id="GO:0005886">
    <property type="term" value="C:plasma membrane"/>
    <property type="evidence" value="ECO:0007669"/>
    <property type="project" value="UniProtKB-SubCell"/>
</dbReference>
<dbReference type="GO" id="GO:0106430">
    <property type="term" value="F:dihydroorotate dehydrogenase (quinone) activity"/>
    <property type="evidence" value="ECO:0007669"/>
    <property type="project" value="UniProtKB-EC"/>
</dbReference>
<dbReference type="GO" id="GO:0006207">
    <property type="term" value="P:'de novo' pyrimidine nucleobase biosynthetic process"/>
    <property type="evidence" value="ECO:0007669"/>
    <property type="project" value="InterPro"/>
</dbReference>
<dbReference type="GO" id="GO:0044205">
    <property type="term" value="P:'de novo' UMP biosynthetic process"/>
    <property type="evidence" value="ECO:0007669"/>
    <property type="project" value="UniProtKB-UniRule"/>
</dbReference>
<dbReference type="CDD" id="cd04738">
    <property type="entry name" value="DHOD_2_like"/>
    <property type="match status" value="1"/>
</dbReference>
<dbReference type="FunFam" id="3.20.20.70:FF:000028">
    <property type="entry name" value="Dihydroorotate dehydrogenase (quinone)"/>
    <property type="match status" value="1"/>
</dbReference>
<dbReference type="Gene3D" id="3.20.20.70">
    <property type="entry name" value="Aldolase class I"/>
    <property type="match status" value="1"/>
</dbReference>
<dbReference type="HAMAP" id="MF_00225">
    <property type="entry name" value="DHO_dh_type2"/>
    <property type="match status" value="1"/>
</dbReference>
<dbReference type="InterPro" id="IPR013785">
    <property type="entry name" value="Aldolase_TIM"/>
</dbReference>
<dbReference type="InterPro" id="IPR050074">
    <property type="entry name" value="DHO_dehydrogenase"/>
</dbReference>
<dbReference type="InterPro" id="IPR012135">
    <property type="entry name" value="Dihydroorotate_DH_1_2"/>
</dbReference>
<dbReference type="InterPro" id="IPR005719">
    <property type="entry name" value="Dihydroorotate_DH_2"/>
</dbReference>
<dbReference type="InterPro" id="IPR005720">
    <property type="entry name" value="Dihydroorotate_DH_cat"/>
</dbReference>
<dbReference type="InterPro" id="IPR001295">
    <property type="entry name" value="Dihydroorotate_DH_CS"/>
</dbReference>
<dbReference type="NCBIfam" id="NF003644">
    <property type="entry name" value="PRK05286.1-1"/>
    <property type="match status" value="1"/>
</dbReference>
<dbReference type="NCBIfam" id="NF003645">
    <property type="entry name" value="PRK05286.1-2"/>
    <property type="match status" value="1"/>
</dbReference>
<dbReference type="NCBIfam" id="NF003646">
    <property type="entry name" value="PRK05286.1-4"/>
    <property type="match status" value="1"/>
</dbReference>
<dbReference type="NCBIfam" id="NF003652">
    <property type="entry name" value="PRK05286.2-5"/>
    <property type="match status" value="1"/>
</dbReference>
<dbReference type="NCBIfam" id="TIGR01036">
    <property type="entry name" value="pyrD_sub2"/>
    <property type="match status" value="1"/>
</dbReference>
<dbReference type="PANTHER" id="PTHR48109:SF4">
    <property type="entry name" value="DIHYDROOROTATE DEHYDROGENASE (QUINONE), MITOCHONDRIAL"/>
    <property type="match status" value="1"/>
</dbReference>
<dbReference type="PANTHER" id="PTHR48109">
    <property type="entry name" value="DIHYDROOROTATE DEHYDROGENASE (QUINONE), MITOCHONDRIAL-RELATED"/>
    <property type="match status" value="1"/>
</dbReference>
<dbReference type="Pfam" id="PF01180">
    <property type="entry name" value="DHO_dh"/>
    <property type="match status" value="1"/>
</dbReference>
<dbReference type="PIRSF" id="PIRSF000164">
    <property type="entry name" value="DHO_oxidase"/>
    <property type="match status" value="1"/>
</dbReference>
<dbReference type="SUPFAM" id="SSF51395">
    <property type="entry name" value="FMN-linked oxidoreductases"/>
    <property type="match status" value="1"/>
</dbReference>
<dbReference type="PROSITE" id="PS00911">
    <property type="entry name" value="DHODEHASE_1"/>
    <property type="match status" value="1"/>
</dbReference>
<dbReference type="PROSITE" id="PS00912">
    <property type="entry name" value="DHODEHASE_2"/>
    <property type="match status" value="1"/>
</dbReference>
<name>PYRD_EDWI9</name>
<gene>
    <name evidence="1" type="primary">pyrD</name>
    <name type="ordered locus">NT01EI_1376</name>
</gene>
<sequence>MFYPFIRKALFQLDPERAHEFTFRQLHRISGTPLIGLLRQSVPSKPVSCMGLSFKNPLGLAAGLDKDGECIDALGAMGFGSIEVGTVTPRPQPGNEKPRLFRIVEAEGLINRMGFNNLGVDNLVENVKKSHFGGILGINIGKNKDTPVEQGKDDYLMCMDKVYSYAGYIAVNISSPNTPGLRTLQYGEALDDLLAAIKTKQAELQQKHARYVPVAVKIAPDLSHEELVQIADSLVRHQIDGVIATNTTLDRSLVNGLNHCAQSGGLSGRPLQLKSTEIIRQLSAELQGRLPIIGVGGIDSVIAAREKMQAGASLVQIYSGFIFKGPGLVKEIVNHI</sequence>
<feature type="chain" id="PRO_1000204315" description="Dihydroorotate dehydrogenase (quinone)">
    <location>
        <begin position="1"/>
        <end position="336"/>
    </location>
</feature>
<feature type="active site" description="Nucleophile" evidence="1">
    <location>
        <position position="175"/>
    </location>
</feature>
<feature type="binding site" evidence="1">
    <location>
        <begin position="62"/>
        <end position="66"/>
    </location>
    <ligand>
        <name>FMN</name>
        <dbReference type="ChEBI" id="CHEBI:58210"/>
    </ligand>
</feature>
<feature type="binding site" evidence="1">
    <location>
        <position position="66"/>
    </location>
    <ligand>
        <name>substrate</name>
    </ligand>
</feature>
<feature type="binding site" evidence="1">
    <location>
        <position position="86"/>
    </location>
    <ligand>
        <name>FMN</name>
        <dbReference type="ChEBI" id="CHEBI:58210"/>
    </ligand>
</feature>
<feature type="binding site" evidence="1">
    <location>
        <begin position="111"/>
        <end position="115"/>
    </location>
    <ligand>
        <name>substrate</name>
    </ligand>
</feature>
<feature type="binding site" evidence="1">
    <location>
        <position position="139"/>
    </location>
    <ligand>
        <name>FMN</name>
        <dbReference type="ChEBI" id="CHEBI:58210"/>
    </ligand>
</feature>
<feature type="binding site" evidence="1">
    <location>
        <position position="172"/>
    </location>
    <ligand>
        <name>FMN</name>
        <dbReference type="ChEBI" id="CHEBI:58210"/>
    </ligand>
</feature>
<feature type="binding site" evidence="1">
    <location>
        <position position="172"/>
    </location>
    <ligand>
        <name>substrate</name>
    </ligand>
</feature>
<feature type="binding site" evidence="1">
    <location>
        <position position="177"/>
    </location>
    <ligand>
        <name>substrate</name>
    </ligand>
</feature>
<feature type="binding site" evidence="1">
    <location>
        <position position="217"/>
    </location>
    <ligand>
        <name>FMN</name>
        <dbReference type="ChEBI" id="CHEBI:58210"/>
    </ligand>
</feature>
<feature type="binding site" evidence="1">
    <location>
        <position position="245"/>
    </location>
    <ligand>
        <name>FMN</name>
        <dbReference type="ChEBI" id="CHEBI:58210"/>
    </ligand>
</feature>
<feature type="binding site" evidence="1">
    <location>
        <begin position="246"/>
        <end position="247"/>
    </location>
    <ligand>
        <name>substrate</name>
    </ligand>
</feature>
<feature type="binding site" evidence="1">
    <location>
        <position position="268"/>
    </location>
    <ligand>
        <name>FMN</name>
        <dbReference type="ChEBI" id="CHEBI:58210"/>
    </ligand>
</feature>
<feature type="binding site" evidence="1">
    <location>
        <position position="297"/>
    </location>
    <ligand>
        <name>FMN</name>
        <dbReference type="ChEBI" id="CHEBI:58210"/>
    </ligand>
</feature>
<feature type="binding site" evidence="1">
    <location>
        <begin position="318"/>
        <end position="319"/>
    </location>
    <ligand>
        <name>FMN</name>
        <dbReference type="ChEBI" id="CHEBI:58210"/>
    </ligand>
</feature>
<comment type="function">
    <text evidence="1">Catalyzes the conversion of dihydroorotate to orotate with quinone as electron acceptor.</text>
</comment>
<comment type="catalytic activity">
    <reaction evidence="1">
        <text>(S)-dihydroorotate + a quinone = orotate + a quinol</text>
        <dbReference type="Rhea" id="RHEA:30187"/>
        <dbReference type="ChEBI" id="CHEBI:24646"/>
        <dbReference type="ChEBI" id="CHEBI:30839"/>
        <dbReference type="ChEBI" id="CHEBI:30864"/>
        <dbReference type="ChEBI" id="CHEBI:132124"/>
        <dbReference type="EC" id="1.3.5.2"/>
    </reaction>
</comment>
<comment type="cofactor">
    <cofactor evidence="1">
        <name>FMN</name>
        <dbReference type="ChEBI" id="CHEBI:58210"/>
    </cofactor>
    <text evidence="1">Binds 1 FMN per subunit.</text>
</comment>
<comment type="pathway">
    <text evidence="1">Pyrimidine metabolism; UMP biosynthesis via de novo pathway; orotate from (S)-dihydroorotate (quinone route): step 1/1.</text>
</comment>
<comment type="subunit">
    <text evidence="1">Monomer.</text>
</comment>
<comment type="subcellular location">
    <subcellularLocation>
        <location evidence="1">Cell membrane</location>
        <topology evidence="1">Peripheral membrane protein</topology>
    </subcellularLocation>
</comment>
<comment type="similarity">
    <text evidence="1">Belongs to the dihydroorotate dehydrogenase family. Type 2 subfamily.</text>
</comment>